<accession>C0ZZ58</accession>
<gene>
    <name evidence="1" type="primary">hisS</name>
    <name type="ordered locus">RER_29350</name>
</gene>
<feature type="chain" id="PRO_1000203144" description="Histidine--tRNA ligase">
    <location>
        <begin position="1"/>
        <end position="423"/>
    </location>
</feature>
<sequence>MSKASTFSAPKGIPDYVPPQSAEFVAVRDGLTRAARLAGYGHIELPIFEDTGLFARGVGESTDVVSKEMYTFADRGDRSVTLRPEGTAGVMRAVIEHSLDRGQLPVKVSYAGPFFRYERPQAGRYRQLQQVGVEAIGIDDPALDAEVIAIADAGFRSLGLDGFRLEITSLGDDTCRPQYRELLQEFLFALPLDEDTRRRAEINPLRVLDDKRPDVREMTAGAPLMLDHLSESCKAHFDEVLAHLDALGVPYVVNPRMVRGLDYYTKTTFEFVHDGLGAQSGIGGGGRYDGLMEQLGGQPLSGIGFGIGVDRTVLALEAEGKSVAPPARVDVFCVPMGAEAKAALVKIAHQLRANGIRVDLAYGNRGVKGSMKAADRSGAAVALVLGERELEEGVVVVKQLATGEQETVPLDQVVDKLGDLVEH</sequence>
<protein>
    <recommendedName>
        <fullName evidence="1">Histidine--tRNA ligase</fullName>
        <ecNumber evidence="1">6.1.1.21</ecNumber>
    </recommendedName>
    <alternativeName>
        <fullName evidence="1">Histidyl-tRNA synthetase</fullName>
        <shortName evidence="1">HisRS</shortName>
    </alternativeName>
</protein>
<name>SYH_RHOE4</name>
<dbReference type="EC" id="6.1.1.21" evidence="1"/>
<dbReference type="EMBL" id="AP008957">
    <property type="protein sequence ID" value="BAH33643.1"/>
    <property type="molecule type" value="Genomic_DNA"/>
</dbReference>
<dbReference type="RefSeq" id="WP_019748310.1">
    <property type="nucleotide sequence ID" value="NC_012490.1"/>
</dbReference>
<dbReference type="SMR" id="C0ZZ58"/>
<dbReference type="GeneID" id="57487125"/>
<dbReference type="KEGG" id="rer:RER_29350"/>
<dbReference type="eggNOG" id="COG0124">
    <property type="taxonomic scope" value="Bacteria"/>
</dbReference>
<dbReference type="HOGENOM" id="CLU_025113_1_1_11"/>
<dbReference type="Proteomes" id="UP000002204">
    <property type="component" value="Chromosome"/>
</dbReference>
<dbReference type="GO" id="GO:0005737">
    <property type="term" value="C:cytoplasm"/>
    <property type="evidence" value="ECO:0007669"/>
    <property type="project" value="UniProtKB-SubCell"/>
</dbReference>
<dbReference type="GO" id="GO:0005524">
    <property type="term" value="F:ATP binding"/>
    <property type="evidence" value="ECO:0007669"/>
    <property type="project" value="UniProtKB-UniRule"/>
</dbReference>
<dbReference type="GO" id="GO:0004821">
    <property type="term" value="F:histidine-tRNA ligase activity"/>
    <property type="evidence" value="ECO:0007669"/>
    <property type="project" value="UniProtKB-UniRule"/>
</dbReference>
<dbReference type="GO" id="GO:0006427">
    <property type="term" value="P:histidyl-tRNA aminoacylation"/>
    <property type="evidence" value="ECO:0007669"/>
    <property type="project" value="UniProtKB-UniRule"/>
</dbReference>
<dbReference type="CDD" id="cd00773">
    <property type="entry name" value="HisRS-like_core"/>
    <property type="match status" value="1"/>
</dbReference>
<dbReference type="CDD" id="cd00859">
    <property type="entry name" value="HisRS_anticodon"/>
    <property type="match status" value="1"/>
</dbReference>
<dbReference type="FunFam" id="3.30.930.10:FF:000005">
    <property type="entry name" value="Histidine--tRNA ligase"/>
    <property type="match status" value="1"/>
</dbReference>
<dbReference type="Gene3D" id="3.40.50.800">
    <property type="entry name" value="Anticodon-binding domain"/>
    <property type="match status" value="1"/>
</dbReference>
<dbReference type="Gene3D" id="3.30.930.10">
    <property type="entry name" value="Bira Bifunctional Protein, Domain 2"/>
    <property type="match status" value="1"/>
</dbReference>
<dbReference type="HAMAP" id="MF_00127">
    <property type="entry name" value="His_tRNA_synth"/>
    <property type="match status" value="1"/>
</dbReference>
<dbReference type="InterPro" id="IPR006195">
    <property type="entry name" value="aa-tRNA-synth_II"/>
</dbReference>
<dbReference type="InterPro" id="IPR045864">
    <property type="entry name" value="aa-tRNA-synth_II/BPL/LPL"/>
</dbReference>
<dbReference type="InterPro" id="IPR004154">
    <property type="entry name" value="Anticodon-bd"/>
</dbReference>
<dbReference type="InterPro" id="IPR036621">
    <property type="entry name" value="Anticodon-bd_dom_sf"/>
</dbReference>
<dbReference type="InterPro" id="IPR015807">
    <property type="entry name" value="His-tRNA-ligase"/>
</dbReference>
<dbReference type="InterPro" id="IPR041715">
    <property type="entry name" value="HisRS-like_core"/>
</dbReference>
<dbReference type="InterPro" id="IPR004516">
    <property type="entry name" value="HisRS/HisZ"/>
</dbReference>
<dbReference type="InterPro" id="IPR033656">
    <property type="entry name" value="HisRS_anticodon"/>
</dbReference>
<dbReference type="NCBIfam" id="TIGR00442">
    <property type="entry name" value="hisS"/>
    <property type="match status" value="1"/>
</dbReference>
<dbReference type="PANTHER" id="PTHR43707:SF1">
    <property type="entry name" value="HISTIDINE--TRNA LIGASE, MITOCHONDRIAL-RELATED"/>
    <property type="match status" value="1"/>
</dbReference>
<dbReference type="PANTHER" id="PTHR43707">
    <property type="entry name" value="HISTIDYL-TRNA SYNTHETASE"/>
    <property type="match status" value="1"/>
</dbReference>
<dbReference type="Pfam" id="PF03129">
    <property type="entry name" value="HGTP_anticodon"/>
    <property type="match status" value="1"/>
</dbReference>
<dbReference type="Pfam" id="PF13393">
    <property type="entry name" value="tRNA-synt_His"/>
    <property type="match status" value="1"/>
</dbReference>
<dbReference type="PIRSF" id="PIRSF001549">
    <property type="entry name" value="His-tRNA_synth"/>
    <property type="match status" value="1"/>
</dbReference>
<dbReference type="SUPFAM" id="SSF52954">
    <property type="entry name" value="Class II aaRS ABD-related"/>
    <property type="match status" value="1"/>
</dbReference>
<dbReference type="SUPFAM" id="SSF55681">
    <property type="entry name" value="Class II aaRS and biotin synthetases"/>
    <property type="match status" value="1"/>
</dbReference>
<dbReference type="PROSITE" id="PS50862">
    <property type="entry name" value="AA_TRNA_LIGASE_II"/>
    <property type="match status" value="1"/>
</dbReference>
<organism>
    <name type="scientific">Rhodococcus erythropolis (strain PR4 / NBRC 100887)</name>
    <dbReference type="NCBI Taxonomy" id="234621"/>
    <lineage>
        <taxon>Bacteria</taxon>
        <taxon>Bacillati</taxon>
        <taxon>Actinomycetota</taxon>
        <taxon>Actinomycetes</taxon>
        <taxon>Mycobacteriales</taxon>
        <taxon>Nocardiaceae</taxon>
        <taxon>Rhodococcus</taxon>
        <taxon>Rhodococcus erythropolis group</taxon>
    </lineage>
</organism>
<reference key="1">
    <citation type="submission" date="2005-03" db="EMBL/GenBank/DDBJ databases">
        <title>Comparison of the complete genome sequences of Rhodococcus erythropolis PR4 and Rhodococcus opacus B4.</title>
        <authorList>
            <person name="Takarada H."/>
            <person name="Sekine M."/>
            <person name="Hosoyama A."/>
            <person name="Yamada R."/>
            <person name="Fujisawa T."/>
            <person name="Omata S."/>
            <person name="Shimizu A."/>
            <person name="Tsukatani N."/>
            <person name="Tanikawa S."/>
            <person name="Fujita N."/>
            <person name="Harayama S."/>
        </authorList>
    </citation>
    <scope>NUCLEOTIDE SEQUENCE [LARGE SCALE GENOMIC DNA]</scope>
    <source>
        <strain>PR4 / NBRC 100887</strain>
    </source>
</reference>
<keyword id="KW-0030">Aminoacyl-tRNA synthetase</keyword>
<keyword id="KW-0067">ATP-binding</keyword>
<keyword id="KW-0963">Cytoplasm</keyword>
<keyword id="KW-0436">Ligase</keyword>
<keyword id="KW-0547">Nucleotide-binding</keyword>
<keyword id="KW-0648">Protein biosynthesis</keyword>
<comment type="catalytic activity">
    <reaction evidence="1">
        <text>tRNA(His) + L-histidine + ATP = L-histidyl-tRNA(His) + AMP + diphosphate + H(+)</text>
        <dbReference type="Rhea" id="RHEA:17313"/>
        <dbReference type="Rhea" id="RHEA-COMP:9665"/>
        <dbReference type="Rhea" id="RHEA-COMP:9689"/>
        <dbReference type="ChEBI" id="CHEBI:15378"/>
        <dbReference type="ChEBI" id="CHEBI:30616"/>
        <dbReference type="ChEBI" id="CHEBI:33019"/>
        <dbReference type="ChEBI" id="CHEBI:57595"/>
        <dbReference type="ChEBI" id="CHEBI:78442"/>
        <dbReference type="ChEBI" id="CHEBI:78527"/>
        <dbReference type="ChEBI" id="CHEBI:456215"/>
        <dbReference type="EC" id="6.1.1.21"/>
    </reaction>
</comment>
<comment type="subunit">
    <text evidence="1">Homodimer.</text>
</comment>
<comment type="subcellular location">
    <subcellularLocation>
        <location evidence="1">Cytoplasm</location>
    </subcellularLocation>
</comment>
<comment type="similarity">
    <text evidence="1">Belongs to the class-II aminoacyl-tRNA synthetase family.</text>
</comment>
<proteinExistence type="inferred from homology"/>
<evidence type="ECO:0000255" key="1">
    <source>
        <dbReference type="HAMAP-Rule" id="MF_00127"/>
    </source>
</evidence>